<dbReference type="EC" id="4.1.2.19" evidence="1"/>
<dbReference type="EMBL" id="CP000800">
    <property type="protein sequence ID" value="ABV18536.1"/>
    <property type="molecule type" value="Genomic_DNA"/>
</dbReference>
<dbReference type="RefSeq" id="WP_001179764.1">
    <property type="nucleotide sequence ID" value="NC_009801.1"/>
</dbReference>
<dbReference type="SMR" id="A7ZUB3"/>
<dbReference type="GeneID" id="75204576"/>
<dbReference type="KEGG" id="ecw:EcE24377A_4433"/>
<dbReference type="HOGENOM" id="CLU_076831_0_0_6"/>
<dbReference type="UniPathway" id="UPA00541">
    <property type="reaction ID" value="UER00603"/>
</dbReference>
<dbReference type="Proteomes" id="UP000001122">
    <property type="component" value="Chromosome"/>
</dbReference>
<dbReference type="GO" id="GO:0005829">
    <property type="term" value="C:cytosol"/>
    <property type="evidence" value="ECO:0007669"/>
    <property type="project" value="TreeGrafter"/>
</dbReference>
<dbReference type="GO" id="GO:0046872">
    <property type="term" value="F:metal ion binding"/>
    <property type="evidence" value="ECO:0007669"/>
    <property type="project" value="UniProtKB-KW"/>
</dbReference>
<dbReference type="GO" id="GO:0008994">
    <property type="term" value="F:rhamnulose-1-phosphate aldolase activity"/>
    <property type="evidence" value="ECO:0007669"/>
    <property type="project" value="UniProtKB-UniRule"/>
</dbReference>
<dbReference type="GO" id="GO:0019323">
    <property type="term" value="P:pentose catabolic process"/>
    <property type="evidence" value="ECO:0007669"/>
    <property type="project" value="TreeGrafter"/>
</dbReference>
<dbReference type="GO" id="GO:0019301">
    <property type="term" value="P:rhamnose catabolic process"/>
    <property type="evidence" value="ECO:0007669"/>
    <property type="project" value="UniProtKB-UniRule"/>
</dbReference>
<dbReference type="CDD" id="cd00398">
    <property type="entry name" value="Aldolase_II"/>
    <property type="match status" value="1"/>
</dbReference>
<dbReference type="FunFam" id="3.40.225.10:FF:000006">
    <property type="entry name" value="Rhamnulose-1-phosphate aldolase"/>
    <property type="match status" value="1"/>
</dbReference>
<dbReference type="Gene3D" id="3.40.225.10">
    <property type="entry name" value="Class II aldolase/adducin N-terminal domain"/>
    <property type="match status" value="1"/>
</dbReference>
<dbReference type="HAMAP" id="MF_00770">
    <property type="entry name" value="RhaD"/>
    <property type="match status" value="1"/>
</dbReference>
<dbReference type="InterPro" id="IPR050197">
    <property type="entry name" value="Aldolase_class_II_sugar_metab"/>
</dbReference>
<dbReference type="InterPro" id="IPR001303">
    <property type="entry name" value="Aldolase_II/adducin_N"/>
</dbReference>
<dbReference type="InterPro" id="IPR036409">
    <property type="entry name" value="Aldolase_II/adducin_N_sf"/>
</dbReference>
<dbReference type="InterPro" id="IPR013447">
    <property type="entry name" value="Rhamnulose-1-P_Aldolase"/>
</dbReference>
<dbReference type="NCBIfam" id="NF002963">
    <property type="entry name" value="PRK03634.1"/>
    <property type="match status" value="1"/>
</dbReference>
<dbReference type="NCBIfam" id="TIGR02624">
    <property type="entry name" value="rhamnu_1P_ald"/>
    <property type="match status" value="1"/>
</dbReference>
<dbReference type="PANTHER" id="PTHR22789">
    <property type="entry name" value="FUCULOSE PHOSPHATE ALDOLASE"/>
    <property type="match status" value="1"/>
</dbReference>
<dbReference type="PANTHER" id="PTHR22789:SF16">
    <property type="entry name" value="RHAMNULOSE-1-PHOSPHATE ALDOLASE"/>
    <property type="match status" value="1"/>
</dbReference>
<dbReference type="Pfam" id="PF00596">
    <property type="entry name" value="Aldolase_II"/>
    <property type="match status" value="1"/>
</dbReference>
<dbReference type="SMART" id="SM01007">
    <property type="entry name" value="Aldolase_II"/>
    <property type="match status" value="1"/>
</dbReference>
<dbReference type="SUPFAM" id="SSF53639">
    <property type="entry name" value="AraD/HMP-PK domain-like"/>
    <property type="match status" value="1"/>
</dbReference>
<sequence length="274" mass="30055">MQNITQSWFVQGMIKATTDAWLKGWDERNGGNLTLRLDDADIAPYKDNFHAQPRYIPLSQPMPLLANTPFIVTGSGKFFRNVQLDPAANLGVVKVDSDGAGYHILWGLTNEAVPTSELPAHFLSHCERIKATNGKDRVIMHCHATNLIALTYVLENDTAVFTRQLWEGSTECLVVFPDGVGILPWMVPGTDEIGQATAQEMQKHSLVLWPFHGVFGSGSTLDETFGLIDTAEKSAQVLVKVYSMGGMKQTISREELIALGKRFGVTPLASALAL</sequence>
<feature type="chain" id="PRO_1000062238" description="Rhamnulose-1-phosphate aldolase">
    <location>
        <begin position="1"/>
        <end position="274"/>
    </location>
</feature>
<feature type="active site" evidence="1">
    <location>
        <position position="117"/>
    </location>
</feature>
<feature type="binding site" evidence="1">
    <location>
        <position position="141"/>
    </location>
    <ligand>
        <name>Zn(2+)</name>
        <dbReference type="ChEBI" id="CHEBI:29105"/>
    </ligand>
</feature>
<feature type="binding site" evidence="1">
    <location>
        <position position="143"/>
    </location>
    <ligand>
        <name>Zn(2+)</name>
        <dbReference type="ChEBI" id="CHEBI:29105"/>
    </ligand>
</feature>
<feature type="binding site" evidence="1">
    <location>
        <position position="212"/>
    </location>
    <ligand>
        <name>Zn(2+)</name>
        <dbReference type="ChEBI" id="CHEBI:29105"/>
    </ligand>
</feature>
<proteinExistence type="inferred from homology"/>
<gene>
    <name evidence="1" type="primary">rhaD</name>
    <name type="ordered locus">EcE24377A_4433</name>
</gene>
<organism>
    <name type="scientific">Escherichia coli O139:H28 (strain E24377A / ETEC)</name>
    <dbReference type="NCBI Taxonomy" id="331111"/>
    <lineage>
        <taxon>Bacteria</taxon>
        <taxon>Pseudomonadati</taxon>
        <taxon>Pseudomonadota</taxon>
        <taxon>Gammaproteobacteria</taxon>
        <taxon>Enterobacterales</taxon>
        <taxon>Enterobacteriaceae</taxon>
        <taxon>Escherichia</taxon>
    </lineage>
</organism>
<accession>A7ZUB3</accession>
<keyword id="KW-0963">Cytoplasm</keyword>
<keyword id="KW-0456">Lyase</keyword>
<keyword id="KW-0479">Metal-binding</keyword>
<keyword id="KW-1185">Reference proteome</keyword>
<keyword id="KW-0684">Rhamnose metabolism</keyword>
<keyword id="KW-0862">Zinc</keyword>
<comment type="function">
    <text evidence="1">Catalyzes the reversible cleavage of L-rhamnulose-1-phosphate to dihydroxyacetone phosphate (DHAP) and L-lactaldehyde.</text>
</comment>
<comment type="catalytic activity">
    <reaction evidence="1">
        <text>L-rhamnulose 1-phosphate = (S)-lactaldehyde + dihydroxyacetone phosphate</text>
        <dbReference type="Rhea" id="RHEA:19689"/>
        <dbReference type="ChEBI" id="CHEBI:18041"/>
        <dbReference type="ChEBI" id="CHEBI:57642"/>
        <dbReference type="ChEBI" id="CHEBI:58313"/>
        <dbReference type="EC" id="4.1.2.19"/>
    </reaction>
</comment>
<comment type="cofactor">
    <cofactor evidence="1">
        <name>Zn(2+)</name>
        <dbReference type="ChEBI" id="CHEBI:29105"/>
    </cofactor>
    <text evidence="1">Binds 1 zinc ion per subunit.</text>
</comment>
<comment type="pathway">
    <text evidence="1">Carbohydrate degradation; L-rhamnose degradation; glycerone phosphate from L-rhamnose: step 3/3.</text>
</comment>
<comment type="subunit">
    <text evidence="1">Homotetramer.</text>
</comment>
<comment type="subcellular location">
    <subcellularLocation>
        <location evidence="1">Cytoplasm</location>
    </subcellularLocation>
</comment>
<comment type="similarity">
    <text evidence="1">Belongs to the aldolase class II family. RhaD subfamily.</text>
</comment>
<name>RHAD_ECO24</name>
<protein>
    <recommendedName>
        <fullName evidence="1">Rhamnulose-1-phosphate aldolase</fullName>
        <ecNumber evidence="1">4.1.2.19</ecNumber>
    </recommendedName>
</protein>
<reference key="1">
    <citation type="journal article" date="2008" name="J. Bacteriol.">
        <title>The pangenome structure of Escherichia coli: comparative genomic analysis of E. coli commensal and pathogenic isolates.</title>
        <authorList>
            <person name="Rasko D.A."/>
            <person name="Rosovitz M.J."/>
            <person name="Myers G.S.A."/>
            <person name="Mongodin E.F."/>
            <person name="Fricke W.F."/>
            <person name="Gajer P."/>
            <person name="Crabtree J."/>
            <person name="Sebaihia M."/>
            <person name="Thomson N.R."/>
            <person name="Chaudhuri R."/>
            <person name="Henderson I.R."/>
            <person name="Sperandio V."/>
            <person name="Ravel J."/>
        </authorList>
    </citation>
    <scope>NUCLEOTIDE SEQUENCE [LARGE SCALE GENOMIC DNA]</scope>
    <source>
        <strain>E24377A / ETEC</strain>
    </source>
</reference>
<evidence type="ECO:0000255" key="1">
    <source>
        <dbReference type="HAMAP-Rule" id="MF_00770"/>
    </source>
</evidence>